<gene>
    <name type="primary">mleuS</name>
    <name type="ORF">DDB_G0291346</name>
</gene>
<comment type="catalytic activity">
    <reaction>
        <text>tRNA(Leu) + L-leucine + ATP = L-leucyl-tRNA(Leu) + AMP + diphosphate</text>
        <dbReference type="Rhea" id="RHEA:11688"/>
        <dbReference type="Rhea" id="RHEA-COMP:9613"/>
        <dbReference type="Rhea" id="RHEA-COMP:9622"/>
        <dbReference type="ChEBI" id="CHEBI:30616"/>
        <dbReference type="ChEBI" id="CHEBI:33019"/>
        <dbReference type="ChEBI" id="CHEBI:57427"/>
        <dbReference type="ChEBI" id="CHEBI:78442"/>
        <dbReference type="ChEBI" id="CHEBI:78494"/>
        <dbReference type="ChEBI" id="CHEBI:456215"/>
        <dbReference type="EC" id="6.1.1.4"/>
    </reaction>
</comment>
<comment type="subcellular location">
    <subcellularLocation>
        <location evidence="1">Mitochondrion</location>
    </subcellularLocation>
</comment>
<comment type="similarity">
    <text evidence="4">Belongs to the class-I aminoacyl-tRNA synthetase family.</text>
</comment>
<reference key="1">
    <citation type="journal article" date="2005" name="Nature">
        <title>The genome of the social amoeba Dictyostelium discoideum.</title>
        <authorList>
            <person name="Eichinger L."/>
            <person name="Pachebat J.A."/>
            <person name="Gloeckner G."/>
            <person name="Rajandream M.A."/>
            <person name="Sucgang R."/>
            <person name="Berriman M."/>
            <person name="Song J."/>
            <person name="Olsen R."/>
            <person name="Szafranski K."/>
            <person name="Xu Q."/>
            <person name="Tunggal B."/>
            <person name="Kummerfeld S."/>
            <person name="Madera M."/>
            <person name="Konfortov B.A."/>
            <person name="Rivero F."/>
            <person name="Bankier A.T."/>
            <person name="Lehmann R."/>
            <person name="Hamlin N."/>
            <person name="Davies R."/>
            <person name="Gaudet P."/>
            <person name="Fey P."/>
            <person name="Pilcher K."/>
            <person name="Chen G."/>
            <person name="Saunders D."/>
            <person name="Sodergren E.J."/>
            <person name="Davis P."/>
            <person name="Kerhornou A."/>
            <person name="Nie X."/>
            <person name="Hall N."/>
            <person name="Anjard C."/>
            <person name="Hemphill L."/>
            <person name="Bason N."/>
            <person name="Farbrother P."/>
            <person name="Desany B."/>
            <person name="Just E."/>
            <person name="Morio T."/>
            <person name="Rost R."/>
            <person name="Churcher C.M."/>
            <person name="Cooper J."/>
            <person name="Haydock S."/>
            <person name="van Driessche N."/>
            <person name="Cronin A."/>
            <person name="Goodhead I."/>
            <person name="Muzny D.M."/>
            <person name="Mourier T."/>
            <person name="Pain A."/>
            <person name="Lu M."/>
            <person name="Harper D."/>
            <person name="Lindsay R."/>
            <person name="Hauser H."/>
            <person name="James K.D."/>
            <person name="Quiles M."/>
            <person name="Madan Babu M."/>
            <person name="Saito T."/>
            <person name="Buchrieser C."/>
            <person name="Wardroper A."/>
            <person name="Felder M."/>
            <person name="Thangavelu M."/>
            <person name="Johnson D."/>
            <person name="Knights A."/>
            <person name="Loulseged H."/>
            <person name="Mungall K.L."/>
            <person name="Oliver K."/>
            <person name="Price C."/>
            <person name="Quail M.A."/>
            <person name="Urushihara H."/>
            <person name="Hernandez J."/>
            <person name="Rabbinowitsch E."/>
            <person name="Steffen D."/>
            <person name="Sanders M."/>
            <person name="Ma J."/>
            <person name="Kohara Y."/>
            <person name="Sharp S."/>
            <person name="Simmonds M.N."/>
            <person name="Spiegler S."/>
            <person name="Tivey A."/>
            <person name="Sugano S."/>
            <person name="White B."/>
            <person name="Walker D."/>
            <person name="Woodward J.R."/>
            <person name="Winckler T."/>
            <person name="Tanaka Y."/>
            <person name="Shaulsky G."/>
            <person name="Schleicher M."/>
            <person name="Weinstock G.M."/>
            <person name="Rosenthal A."/>
            <person name="Cox E.C."/>
            <person name="Chisholm R.L."/>
            <person name="Gibbs R.A."/>
            <person name="Loomis W.F."/>
            <person name="Platzer M."/>
            <person name="Kay R.R."/>
            <person name="Williams J.G."/>
            <person name="Dear P.H."/>
            <person name="Noegel A.A."/>
            <person name="Barrell B.G."/>
            <person name="Kuspa A."/>
        </authorList>
    </citation>
    <scope>NUCLEOTIDE SEQUENCE [LARGE SCALE GENOMIC DNA]</scope>
    <source>
        <strain>AX4</strain>
    </source>
</reference>
<sequence>MFNLYRSSLKNLKLPNINNNIKSNLVIRSYTTNINGNIKNDDDNNKFYSLSQFPYPSGALHMGHVRVYTISDCIARLKRMQGYDVIHPMGWDAFGLPAENAAIDKQVSPSEWTNLNISSMRDQLKLLNFQFDWDRELSTCNKEYYRWTQEIFLRLLKSGLAYRKSATVNWDPIDQTVLANEQVDAQGRSWRSNAIVEKKEMKQWFYKITSMADRLTDDLDQLPGWSDEIKNMQKEWIGRSYGHLIEFQSCAQKPLSNITVFTTRAETIYGVSFLAISPHHSEINQIRANLINDEKRLELDQYLKEIQEIKNKMGTQEDVENLKTFNTGLTFYQPITKKYIPLILSNFVHADYGTGAVMGVPSHNRSDYQVAKQQNLKLLPVLGIEREQQQQQQQQQQQQQLEIEEECYDYSNTGKLINSGQDTGIEFKEFIKRLEDQQLIKRQTNYRIHDWLISRQRYWGTPIPIIVCEKCGDVPVPSDQLPVELPIDIQFTGKGNLLNQLDHWKNVKCPCCGSQATRETDTMDTFVDSSWYFLRFLDSKNSQSIFSSELVNRFMPIDVYVGGIEHAILHLLYSRFITKFLKDQQLIDHSEPFKVLLAQGLVKSPTYRDSITNKPIHPSNVEFKTIKSNESGKSQQQTINKLTGNQVSVTIEKMSKSKLNGIDPKEIIDKYGSDTLKTYILFKAPPEKSLDWDTQGIEGCKKWLTRINVSIQSFLNQFDVIEGKEQHQHQQQQHQQPLPSSEFNEQQSKEVKDILFETHLTMNKVTESIDKHSFNTGIAALMELSNTLQKSSPQIKLTKEYYQSLRALTLMLFPFSPIFSQIHWKSLIDDLPQSCKSFYSENYSSFEQQSYGNSNDNDVFNQRWPKPTPSALVRDFNSLVIQFDGKTKGVESIPTSITDFSNFVQSNSKYLNRFKDKTIDQIFIGTTKTGNSINFTFKKK</sequence>
<keyword id="KW-0030">Aminoacyl-tRNA synthetase</keyword>
<keyword id="KW-0067">ATP-binding</keyword>
<keyword id="KW-0436">Ligase</keyword>
<keyword id="KW-0496">Mitochondrion</keyword>
<keyword id="KW-0547">Nucleotide-binding</keyword>
<keyword id="KW-0648">Protein biosynthesis</keyword>
<keyword id="KW-1185">Reference proteome</keyword>
<keyword id="KW-0809">Transit peptide</keyword>
<name>SYLM_DICDI</name>
<organism>
    <name type="scientific">Dictyostelium discoideum</name>
    <name type="common">Social amoeba</name>
    <dbReference type="NCBI Taxonomy" id="44689"/>
    <lineage>
        <taxon>Eukaryota</taxon>
        <taxon>Amoebozoa</taxon>
        <taxon>Evosea</taxon>
        <taxon>Eumycetozoa</taxon>
        <taxon>Dictyostelia</taxon>
        <taxon>Dictyosteliales</taxon>
        <taxon>Dictyosteliaceae</taxon>
        <taxon>Dictyostelium</taxon>
    </lineage>
</organism>
<protein>
    <recommendedName>
        <fullName>Leucine--tRNA ligase, mitochondrial</fullName>
        <ecNumber>6.1.1.4</ecNumber>
    </recommendedName>
    <alternativeName>
        <fullName>LeuRM</fullName>
    </alternativeName>
    <alternativeName>
        <fullName>Leucyl-tRNA synthetase</fullName>
    </alternativeName>
</protein>
<accession>Q54ET5</accession>
<proteinExistence type="inferred from homology"/>
<dbReference type="EC" id="6.1.1.4"/>
<dbReference type="EMBL" id="AAFI02000177">
    <property type="protein sequence ID" value="EAL61657.1"/>
    <property type="molecule type" value="Genomic_DNA"/>
</dbReference>
<dbReference type="RefSeq" id="XP_635155.1">
    <property type="nucleotide sequence ID" value="XM_630063.1"/>
</dbReference>
<dbReference type="SMR" id="Q54ET5"/>
<dbReference type="FunCoup" id="Q54ET5">
    <property type="interactions" value="396"/>
</dbReference>
<dbReference type="STRING" id="44689.Q54ET5"/>
<dbReference type="GlyGen" id="Q54ET5">
    <property type="glycosylation" value="1 site"/>
</dbReference>
<dbReference type="PaxDb" id="44689-DDB0231251"/>
<dbReference type="EnsemblProtists" id="EAL61657">
    <property type="protein sequence ID" value="EAL61657"/>
    <property type="gene ID" value="DDB_G0291346"/>
</dbReference>
<dbReference type="GeneID" id="8628101"/>
<dbReference type="KEGG" id="ddi:DDB_G0291346"/>
<dbReference type="dictyBase" id="DDB_G0291346">
    <property type="gene designation" value="mleuS"/>
</dbReference>
<dbReference type="VEuPathDB" id="AmoebaDB:DDB_G0291346"/>
<dbReference type="eggNOG" id="KOG0435">
    <property type="taxonomic scope" value="Eukaryota"/>
</dbReference>
<dbReference type="HOGENOM" id="CLU_004427_0_0_1"/>
<dbReference type="InParanoid" id="Q54ET5"/>
<dbReference type="OMA" id="GIEHACM"/>
<dbReference type="PhylomeDB" id="Q54ET5"/>
<dbReference type="PRO" id="PR:Q54ET5"/>
<dbReference type="Proteomes" id="UP000002195">
    <property type="component" value="Chromosome 6"/>
</dbReference>
<dbReference type="GO" id="GO:0005739">
    <property type="term" value="C:mitochondrion"/>
    <property type="evidence" value="ECO:0000250"/>
    <property type="project" value="dictyBase"/>
</dbReference>
<dbReference type="GO" id="GO:0002161">
    <property type="term" value="F:aminoacyl-tRNA deacylase activity"/>
    <property type="evidence" value="ECO:0007669"/>
    <property type="project" value="InterPro"/>
</dbReference>
<dbReference type="GO" id="GO:0005524">
    <property type="term" value="F:ATP binding"/>
    <property type="evidence" value="ECO:0007669"/>
    <property type="project" value="UniProtKB-KW"/>
</dbReference>
<dbReference type="GO" id="GO:0004823">
    <property type="term" value="F:leucine-tRNA ligase activity"/>
    <property type="evidence" value="ECO:0000250"/>
    <property type="project" value="dictyBase"/>
</dbReference>
<dbReference type="GO" id="GO:0000372">
    <property type="term" value="P:Group I intron splicing"/>
    <property type="evidence" value="ECO:0000250"/>
    <property type="project" value="dictyBase"/>
</dbReference>
<dbReference type="GO" id="GO:0006429">
    <property type="term" value="P:leucyl-tRNA aminoacylation"/>
    <property type="evidence" value="ECO:0000250"/>
    <property type="project" value="dictyBase"/>
</dbReference>
<dbReference type="GO" id="GO:0032543">
    <property type="term" value="P:mitochondrial translation"/>
    <property type="evidence" value="ECO:0000318"/>
    <property type="project" value="GO_Central"/>
</dbReference>
<dbReference type="CDD" id="cd00812">
    <property type="entry name" value="LeuRS_core"/>
    <property type="match status" value="1"/>
</dbReference>
<dbReference type="FunFam" id="3.40.50.620:FF:000060">
    <property type="entry name" value="Leucine--tRNA ligase"/>
    <property type="match status" value="1"/>
</dbReference>
<dbReference type="FunFam" id="1.10.730.10:FF:000157">
    <property type="entry name" value="Leucine--tRNA ligase, mitochondrial"/>
    <property type="match status" value="1"/>
</dbReference>
<dbReference type="FunFam" id="3.40.50.620:FF:000100">
    <property type="entry name" value="probable leucine--tRNA ligase, mitochondrial"/>
    <property type="match status" value="1"/>
</dbReference>
<dbReference type="Gene3D" id="3.40.50.620">
    <property type="entry name" value="HUPs"/>
    <property type="match status" value="2"/>
</dbReference>
<dbReference type="Gene3D" id="1.10.730.10">
    <property type="entry name" value="Isoleucyl-tRNA Synthetase, Domain 1"/>
    <property type="match status" value="1"/>
</dbReference>
<dbReference type="HAMAP" id="MF_00049_B">
    <property type="entry name" value="Leu_tRNA_synth_B"/>
    <property type="match status" value="1"/>
</dbReference>
<dbReference type="InterPro" id="IPR001412">
    <property type="entry name" value="aa-tRNA-synth_I_CS"/>
</dbReference>
<dbReference type="InterPro" id="IPR002300">
    <property type="entry name" value="aa-tRNA-synth_Ia"/>
</dbReference>
<dbReference type="InterPro" id="IPR002302">
    <property type="entry name" value="Leu-tRNA-ligase"/>
</dbReference>
<dbReference type="InterPro" id="IPR025709">
    <property type="entry name" value="Leu_tRNA-synth_edit"/>
</dbReference>
<dbReference type="InterPro" id="IPR013155">
    <property type="entry name" value="M/V/L/I-tRNA-synth_anticd-bd"/>
</dbReference>
<dbReference type="InterPro" id="IPR015413">
    <property type="entry name" value="Methionyl/Leucyl_tRNA_Synth"/>
</dbReference>
<dbReference type="InterPro" id="IPR014729">
    <property type="entry name" value="Rossmann-like_a/b/a_fold"/>
</dbReference>
<dbReference type="InterPro" id="IPR009080">
    <property type="entry name" value="tRNAsynth_Ia_anticodon-bd"/>
</dbReference>
<dbReference type="InterPro" id="IPR009008">
    <property type="entry name" value="Val/Leu/Ile-tRNA-synth_edit"/>
</dbReference>
<dbReference type="NCBIfam" id="TIGR00396">
    <property type="entry name" value="leuS_bact"/>
    <property type="match status" value="1"/>
</dbReference>
<dbReference type="PANTHER" id="PTHR43740:SF2">
    <property type="entry name" value="LEUCINE--TRNA LIGASE, MITOCHONDRIAL"/>
    <property type="match status" value="1"/>
</dbReference>
<dbReference type="PANTHER" id="PTHR43740">
    <property type="entry name" value="LEUCYL-TRNA SYNTHETASE"/>
    <property type="match status" value="1"/>
</dbReference>
<dbReference type="Pfam" id="PF08264">
    <property type="entry name" value="Anticodon_1"/>
    <property type="match status" value="1"/>
</dbReference>
<dbReference type="Pfam" id="PF00133">
    <property type="entry name" value="tRNA-synt_1"/>
    <property type="match status" value="1"/>
</dbReference>
<dbReference type="Pfam" id="PF13603">
    <property type="entry name" value="tRNA-synt_1_2"/>
    <property type="match status" value="1"/>
</dbReference>
<dbReference type="Pfam" id="PF09334">
    <property type="entry name" value="tRNA-synt_1g"/>
    <property type="match status" value="1"/>
</dbReference>
<dbReference type="PRINTS" id="PR00985">
    <property type="entry name" value="TRNASYNTHLEU"/>
</dbReference>
<dbReference type="SUPFAM" id="SSF47323">
    <property type="entry name" value="Anticodon-binding domain of a subclass of class I aminoacyl-tRNA synthetases"/>
    <property type="match status" value="1"/>
</dbReference>
<dbReference type="SUPFAM" id="SSF52374">
    <property type="entry name" value="Nucleotidylyl transferase"/>
    <property type="match status" value="1"/>
</dbReference>
<dbReference type="SUPFAM" id="SSF50677">
    <property type="entry name" value="ValRS/IleRS/LeuRS editing domain"/>
    <property type="match status" value="1"/>
</dbReference>
<dbReference type="PROSITE" id="PS00178">
    <property type="entry name" value="AA_TRNA_LIGASE_I"/>
    <property type="match status" value="1"/>
</dbReference>
<evidence type="ECO:0000250" key="1"/>
<evidence type="ECO:0000255" key="2"/>
<evidence type="ECO:0000256" key="3">
    <source>
        <dbReference type="SAM" id="MobiDB-lite"/>
    </source>
</evidence>
<evidence type="ECO:0000305" key="4"/>
<feature type="transit peptide" description="Mitochondrion" evidence="2">
    <location>
        <begin position="1"/>
        <end status="unknown"/>
    </location>
</feature>
<feature type="chain" id="PRO_0000328292" description="Leucine--tRNA ligase, mitochondrial">
    <location>
        <begin status="unknown"/>
        <end position="940"/>
    </location>
</feature>
<feature type="region of interest" description="Disordered" evidence="3">
    <location>
        <begin position="724"/>
        <end position="744"/>
    </location>
</feature>
<feature type="short sequence motif" description="'HIGH' region" evidence="1">
    <location>
        <begin position="54"/>
        <end position="64"/>
    </location>
</feature>
<feature type="short sequence motif" description="'KMSKS' region" evidence="1">
    <location>
        <begin position="638"/>
        <end position="642"/>
    </location>
</feature>
<feature type="binding site" evidence="1">
    <location>
        <position position="641"/>
    </location>
    <ligand>
        <name>ATP</name>
        <dbReference type="ChEBI" id="CHEBI:30616"/>
    </ligand>
</feature>